<organism>
    <name type="scientific">Lactobacillus helveticus (strain DPC 4571)</name>
    <dbReference type="NCBI Taxonomy" id="405566"/>
    <lineage>
        <taxon>Bacteria</taxon>
        <taxon>Bacillati</taxon>
        <taxon>Bacillota</taxon>
        <taxon>Bacilli</taxon>
        <taxon>Lactobacillales</taxon>
        <taxon>Lactobacillaceae</taxon>
        <taxon>Lactobacillus</taxon>
    </lineage>
</organism>
<reference key="1">
    <citation type="journal article" date="2008" name="J. Bacteriol.">
        <title>Genome sequence of Lactobacillus helveticus: an organism distinguished by selective gene loss and IS element expansion.</title>
        <authorList>
            <person name="Callanan M."/>
            <person name="Kaleta P."/>
            <person name="O'Callaghan J."/>
            <person name="O'Sullivan O."/>
            <person name="Jordan K."/>
            <person name="McAuliffe O."/>
            <person name="Sangrador-Vegas A."/>
            <person name="Slattery L."/>
            <person name="Fitzgerald G.F."/>
            <person name="Beresford T."/>
            <person name="Ross R.P."/>
        </authorList>
    </citation>
    <scope>NUCLEOTIDE SEQUENCE [LARGE SCALE GENOMIC DNA]</scope>
    <source>
        <strain>DPC 4571</strain>
    </source>
</reference>
<feature type="chain" id="PRO_1000073230" description="Large ribosomal subunit protein uL2">
    <location>
        <begin position="1"/>
        <end position="278"/>
    </location>
</feature>
<feature type="region of interest" description="Disordered" evidence="2">
    <location>
        <begin position="211"/>
        <end position="278"/>
    </location>
</feature>
<feature type="compositionally biased region" description="Basic and acidic residues" evidence="2">
    <location>
        <begin position="258"/>
        <end position="270"/>
    </location>
</feature>
<name>RL2_LACH4</name>
<evidence type="ECO:0000255" key="1">
    <source>
        <dbReference type="HAMAP-Rule" id="MF_01320"/>
    </source>
</evidence>
<evidence type="ECO:0000256" key="2">
    <source>
        <dbReference type="SAM" id="MobiDB-lite"/>
    </source>
</evidence>
<evidence type="ECO:0000305" key="3"/>
<comment type="function">
    <text evidence="1">One of the primary rRNA binding proteins. Required for association of the 30S and 50S subunits to form the 70S ribosome, for tRNA binding and peptide bond formation. It has been suggested to have peptidyltransferase activity; this is somewhat controversial. Makes several contacts with the 16S rRNA in the 70S ribosome.</text>
</comment>
<comment type="subunit">
    <text evidence="1">Part of the 50S ribosomal subunit. Forms a bridge to the 30S subunit in the 70S ribosome.</text>
</comment>
<comment type="similarity">
    <text evidence="1">Belongs to the universal ribosomal protein uL2 family.</text>
</comment>
<protein>
    <recommendedName>
        <fullName evidence="1">Large ribosomal subunit protein uL2</fullName>
    </recommendedName>
    <alternativeName>
        <fullName evidence="3">50S ribosomal protein L2</fullName>
    </alternativeName>
</protein>
<dbReference type="EMBL" id="CP000517">
    <property type="protein sequence ID" value="ABX26539.1"/>
    <property type="molecule type" value="Genomic_DNA"/>
</dbReference>
<dbReference type="RefSeq" id="WP_012211378.1">
    <property type="nucleotide sequence ID" value="NC_010080.1"/>
</dbReference>
<dbReference type="SMR" id="A8YXK8"/>
<dbReference type="KEGG" id="lhe:lhv_0315"/>
<dbReference type="eggNOG" id="COG0090">
    <property type="taxonomic scope" value="Bacteria"/>
</dbReference>
<dbReference type="HOGENOM" id="CLU_036235_2_1_9"/>
<dbReference type="Proteomes" id="UP000000790">
    <property type="component" value="Chromosome"/>
</dbReference>
<dbReference type="GO" id="GO:0015934">
    <property type="term" value="C:large ribosomal subunit"/>
    <property type="evidence" value="ECO:0007669"/>
    <property type="project" value="InterPro"/>
</dbReference>
<dbReference type="GO" id="GO:0019843">
    <property type="term" value="F:rRNA binding"/>
    <property type="evidence" value="ECO:0007669"/>
    <property type="project" value="UniProtKB-UniRule"/>
</dbReference>
<dbReference type="GO" id="GO:0003735">
    <property type="term" value="F:structural constituent of ribosome"/>
    <property type="evidence" value="ECO:0007669"/>
    <property type="project" value="InterPro"/>
</dbReference>
<dbReference type="GO" id="GO:0016740">
    <property type="term" value="F:transferase activity"/>
    <property type="evidence" value="ECO:0007669"/>
    <property type="project" value="InterPro"/>
</dbReference>
<dbReference type="GO" id="GO:0002181">
    <property type="term" value="P:cytoplasmic translation"/>
    <property type="evidence" value="ECO:0007669"/>
    <property type="project" value="TreeGrafter"/>
</dbReference>
<dbReference type="FunFam" id="2.30.30.30:FF:000001">
    <property type="entry name" value="50S ribosomal protein L2"/>
    <property type="match status" value="1"/>
</dbReference>
<dbReference type="FunFam" id="2.40.50.140:FF:000003">
    <property type="entry name" value="50S ribosomal protein L2"/>
    <property type="match status" value="1"/>
</dbReference>
<dbReference type="FunFam" id="4.10.950.10:FF:000001">
    <property type="entry name" value="50S ribosomal protein L2"/>
    <property type="match status" value="1"/>
</dbReference>
<dbReference type="Gene3D" id="2.30.30.30">
    <property type="match status" value="1"/>
</dbReference>
<dbReference type="Gene3D" id="2.40.50.140">
    <property type="entry name" value="Nucleic acid-binding proteins"/>
    <property type="match status" value="1"/>
</dbReference>
<dbReference type="Gene3D" id="4.10.950.10">
    <property type="entry name" value="Ribosomal protein L2, domain 3"/>
    <property type="match status" value="1"/>
</dbReference>
<dbReference type="HAMAP" id="MF_01320_B">
    <property type="entry name" value="Ribosomal_uL2_B"/>
    <property type="match status" value="1"/>
</dbReference>
<dbReference type="InterPro" id="IPR012340">
    <property type="entry name" value="NA-bd_OB-fold"/>
</dbReference>
<dbReference type="InterPro" id="IPR014722">
    <property type="entry name" value="Rib_uL2_dom2"/>
</dbReference>
<dbReference type="InterPro" id="IPR002171">
    <property type="entry name" value="Ribosomal_uL2"/>
</dbReference>
<dbReference type="InterPro" id="IPR005880">
    <property type="entry name" value="Ribosomal_uL2_bac/org-type"/>
</dbReference>
<dbReference type="InterPro" id="IPR022669">
    <property type="entry name" value="Ribosomal_uL2_C"/>
</dbReference>
<dbReference type="InterPro" id="IPR022671">
    <property type="entry name" value="Ribosomal_uL2_CS"/>
</dbReference>
<dbReference type="InterPro" id="IPR014726">
    <property type="entry name" value="Ribosomal_uL2_dom3"/>
</dbReference>
<dbReference type="InterPro" id="IPR022666">
    <property type="entry name" value="Ribosomal_uL2_RNA-bd_dom"/>
</dbReference>
<dbReference type="InterPro" id="IPR008991">
    <property type="entry name" value="Translation_prot_SH3-like_sf"/>
</dbReference>
<dbReference type="NCBIfam" id="TIGR01171">
    <property type="entry name" value="rplB_bact"/>
    <property type="match status" value="1"/>
</dbReference>
<dbReference type="PANTHER" id="PTHR13691:SF5">
    <property type="entry name" value="LARGE RIBOSOMAL SUBUNIT PROTEIN UL2M"/>
    <property type="match status" value="1"/>
</dbReference>
<dbReference type="PANTHER" id="PTHR13691">
    <property type="entry name" value="RIBOSOMAL PROTEIN L2"/>
    <property type="match status" value="1"/>
</dbReference>
<dbReference type="Pfam" id="PF00181">
    <property type="entry name" value="Ribosomal_L2"/>
    <property type="match status" value="1"/>
</dbReference>
<dbReference type="Pfam" id="PF03947">
    <property type="entry name" value="Ribosomal_L2_C"/>
    <property type="match status" value="1"/>
</dbReference>
<dbReference type="PIRSF" id="PIRSF002158">
    <property type="entry name" value="Ribosomal_L2"/>
    <property type="match status" value="1"/>
</dbReference>
<dbReference type="SMART" id="SM01383">
    <property type="entry name" value="Ribosomal_L2"/>
    <property type="match status" value="1"/>
</dbReference>
<dbReference type="SMART" id="SM01382">
    <property type="entry name" value="Ribosomal_L2_C"/>
    <property type="match status" value="1"/>
</dbReference>
<dbReference type="SUPFAM" id="SSF50249">
    <property type="entry name" value="Nucleic acid-binding proteins"/>
    <property type="match status" value="1"/>
</dbReference>
<dbReference type="SUPFAM" id="SSF50104">
    <property type="entry name" value="Translation proteins SH3-like domain"/>
    <property type="match status" value="1"/>
</dbReference>
<dbReference type="PROSITE" id="PS00467">
    <property type="entry name" value="RIBOSOMAL_L2"/>
    <property type="match status" value="1"/>
</dbReference>
<proteinExistence type="inferred from homology"/>
<accession>A8YXK8</accession>
<keyword id="KW-0687">Ribonucleoprotein</keyword>
<keyword id="KW-0689">Ribosomal protein</keyword>
<keyword id="KW-0694">RNA-binding</keyword>
<keyword id="KW-0699">rRNA-binding</keyword>
<sequence>MAIKIYKPTTNGRRHMTSSDFAEITKTKPEKTLLESQSHTAGRNSYGHITVRHRGGGHKQKYRIIDFKRNKDNTKAVVKAIEYDPNRTANIALLHYTDGIKAYILAPKGLKVGDIVESGDSVDIKPGNALALKNIPSGTSIHNIELKPGKGGQLVRSAGASAQVLGVDGDYTLVRLQSGEVRKILSSCRATIGVVGNEQHSLIKLGKAGRKRWLGKRPQSRGSVMNPNDHPHGGGEGKAPVGRPQPMTPWGKKARGIKTRDTKKASEKLIIRRRKGSK</sequence>
<gene>
    <name evidence="1" type="primary">rplB</name>
    <name type="ordered locus">lhv_0315</name>
</gene>